<gene>
    <name type="ordered locus">PYRAB09750</name>
    <name type="ORF">PAB1725</name>
</gene>
<proteinExistence type="inferred from homology"/>
<protein>
    <recommendedName>
        <fullName evidence="1">UPF0200 protein PYRAB09750</fullName>
    </recommendedName>
</protein>
<reference key="1">
    <citation type="journal article" date="2003" name="Mol. Microbiol.">
        <title>An integrated analysis of the genome of the hyperthermophilic archaeon Pyrococcus abyssi.</title>
        <authorList>
            <person name="Cohen G.N."/>
            <person name="Barbe V."/>
            <person name="Flament D."/>
            <person name="Galperin M."/>
            <person name="Heilig R."/>
            <person name="Lecompte O."/>
            <person name="Poch O."/>
            <person name="Prieur D."/>
            <person name="Querellou J."/>
            <person name="Ripp R."/>
            <person name="Thierry J.-C."/>
            <person name="Van der Oost J."/>
            <person name="Weissenbach J."/>
            <person name="Zivanovic Y."/>
            <person name="Forterre P."/>
        </authorList>
    </citation>
    <scope>NUCLEOTIDE SEQUENCE [LARGE SCALE GENOMIC DNA]</scope>
    <source>
        <strain>GE5 / Orsay</strain>
    </source>
</reference>
<reference key="2">
    <citation type="journal article" date="2012" name="Curr. Microbiol.">
        <title>Re-annotation of two hyperthermophilic archaea Pyrococcus abyssi GE5 and Pyrococcus furiosus DSM 3638.</title>
        <authorList>
            <person name="Gao J."/>
            <person name="Wang J."/>
        </authorList>
    </citation>
    <scope>GENOME REANNOTATION</scope>
    <source>
        <strain>GE5 / Orsay</strain>
    </source>
</reference>
<organism>
    <name type="scientific">Pyrococcus abyssi (strain GE5 / Orsay)</name>
    <dbReference type="NCBI Taxonomy" id="272844"/>
    <lineage>
        <taxon>Archaea</taxon>
        <taxon>Methanobacteriati</taxon>
        <taxon>Methanobacteriota</taxon>
        <taxon>Thermococci</taxon>
        <taxon>Thermococcales</taxon>
        <taxon>Thermococcaceae</taxon>
        <taxon>Pyrococcus</taxon>
    </lineage>
</organism>
<accession>Q9V023</accession>
<accession>G8ZIE0</accession>
<name>Y975_PYRAB</name>
<comment type="similarity">
    <text evidence="1">Belongs to the UPF0200 family.</text>
</comment>
<keyword id="KW-0067">ATP-binding</keyword>
<keyword id="KW-0547">Nucleotide-binding</keyword>
<dbReference type="EMBL" id="AJ248286">
    <property type="protein sequence ID" value="CAB49883.1"/>
    <property type="molecule type" value="Genomic_DNA"/>
</dbReference>
<dbReference type="EMBL" id="HE613800">
    <property type="protein sequence ID" value="CCE70381.1"/>
    <property type="molecule type" value="Genomic_DNA"/>
</dbReference>
<dbReference type="PIR" id="F75072">
    <property type="entry name" value="F75072"/>
</dbReference>
<dbReference type="RefSeq" id="WP_048146776.1">
    <property type="nucleotide sequence ID" value="NC_000868.1"/>
</dbReference>
<dbReference type="SMR" id="Q9V023"/>
<dbReference type="STRING" id="272844.PAB1725"/>
<dbReference type="KEGG" id="pab:PAB1725"/>
<dbReference type="PATRIC" id="fig|272844.11.peg.1027"/>
<dbReference type="eggNOG" id="arCOG01045">
    <property type="taxonomic scope" value="Archaea"/>
</dbReference>
<dbReference type="HOGENOM" id="CLU_096329_1_0_2"/>
<dbReference type="OrthoDB" id="85381at2157"/>
<dbReference type="PhylomeDB" id="Q9V023"/>
<dbReference type="Proteomes" id="UP000000810">
    <property type="component" value="Chromosome"/>
</dbReference>
<dbReference type="Proteomes" id="UP000009139">
    <property type="component" value="Chromosome"/>
</dbReference>
<dbReference type="GO" id="GO:0005524">
    <property type="term" value="F:ATP binding"/>
    <property type="evidence" value="ECO:0007669"/>
    <property type="project" value="UniProtKB-UniRule"/>
</dbReference>
<dbReference type="Gene3D" id="3.40.50.300">
    <property type="entry name" value="P-loop containing nucleotide triphosphate hydrolases"/>
    <property type="match status" value="1"/>
</dbReference>
<dbReference type="HAMAP" id="MF_01111">
    <property type="entry name" value="UPF0200"/>
    <property type="match status" value="1"/>
</dbReference>
<dbReference type="InterPro" id="IPR022970">
    <property type="entry name" value="NTP_hydrolase-rel"/>
</dbReference>
<dbReference type="InterPro" id="IPR027417">
    <property type="entry name" value="P-loop_NTPase"/>
</dbReference>
<dbReference type="PANTHER" id="PTHR41930:SF1">
    <property type="entry name" value="DEPHOSPHO-COA KINASE"/>
    <property type="match status" value="1"/>
</dbReference>
<dbReference type="PANTHER" id="PTHR41930">
    <property type="entry name" value="UPF0200 PROTEIN MJ1399"/>
    <property type="match status" value="1"/>
</dbReference>
<dbReference type="Pfam" id="PF13207">
    <property type="entry name" value="AAA_17"/>
    <property type="match status" value="1"/>
</dbReference>
<dbReference type="SUPFAM" id="SSF52540">
    <property type="entry name" value="P-loop containing nucleoside triphosphate hydrolases"/>
    <property type="match status" value="1"/>
</dbReference>
<feature type="chain" id="PRO_0000094529" description="UPF0200 protein PYRAB09750">
    <location>
        <begin position="1"/>
        <end position="187"/>
    </location>
</feature>
<feature type="binding site" evidence="1">
    <location>
        <begin position="7"/>
        <end position="14"/>
    </location>
    <ligand>
        <name>ATP</name>
        <dbReference type="ChEBI" id="CHEBI:30616"/>
    </ligand>
</feature>
<sequence>MIILLTGMPGSGKGEVAKAFKKLGIPVVSMGDAIREEAEKRGIPKTPEGLKYVSLKVREELGPGAVAILIAPKLKNLLKKHKTVVVEGVRSPKEVEEFRKLFPNEEIKVLAIHSPPGARYERMRKRGRSDDPKTWEEFLDRDKKELNFGIGEVIALADYMIVNDDSFQKFKRDIEVIIRKILYFNHQ</sequence>
<evidence type="ECO:0000255" key="1">
    <source>
        <dbReference type="HAMAP-Rule" id="MF_01111"/>
    </source>
</evidence>